<feature type="chain" id="PRO_0000178032" description="Solute carrier family 12 member 4">
    <location>
        <begin position="1"/>
        <end position="1085"/>
    </location>
</feature>
<feature type="topological domain" description="Cytoplasmic" evidence="10">
    <location>
        <begin position="1"/>
        <end position="119"/>
    </location>
</feature>
<feature type="transmembrane region" description="Discontinuously helical; Name=1" evidence="3">
    <location>
        <begin position="120"/>
        <end position="141"/>
    </location>
</feature>
<feature type="topological domain" description="Extracellular" evidence="10">
    <location>
        <begin position="142"/>
        <end position="149"/>
    </location>
</feature>
<feature type="transmembrane region" description="Helical; Name=2" evidence="3">
    <location>
        <begin position="150"/>
        <end position="172"/>
    </location>
</feature>
<feature type="topological domain" description="Cytoplasmic" evidence="10">
    <location>
        <begin position="173"/>
        <end position="196"/>
    </location>
</feature>
<feature type="transmembrane region" description="Helical; Name=3" evidence="3">
    <location>
        <begin position="197"/>
        <end position="225"/>
    </location>
</feature>
<feature type="topological domain" description="Extracellular" evidence="10">
    <location>
        <begin position="226"/>
        <end position="248"/>
    </location>
</feature>
<feature type="transmembrane region" description="Helical; Name=4" evidence="3">
    <location>
        <begin position="249"/>
        <end position="271"/>
    </location>
</feature>
<feature type="transmembrane region" description="Helical; Name=5" evidence="3">
    <location>
        <begin position="272"/>
        <end position="297"/>
    </location>
</feature>
<feature type="topological domain" description="Extracellular" evidence="10">
    <location>
        <begin position="298"/>
        <end position="419"/>
    </location>
</feature>
<feature type="transmembrane region" description="Helical; Name=6" evidence="3">
    <location>
        <begin position="420"/>
        <end position="440"/>
    </location>
</feature>
<feature type="topological domain" description="Cytoplasmic" evidence="10">
    <location>
        <begin position="441"/>
        <end position="450"/>
    </location>
</feature>
<feature type="transmembrane region" description="Helical; Name=7" evidence="3">
    <location>
        <begin position="451"/>
        <end position="473"/>
    </location>
</feature>
<feature type="topological domain" description="Extracellular" evidence="10">
    <location>
        <begin position="474"/>
        <end position="504"/>
    </location>
</feature>
<feature type="transmembrane region" description="Helical; Name=8" evidence="3">
    <location>
        <begin position="505"/>
        <end position="531"/>
    </location>
</feature>
<feature type="topological domain" description="Cytoplasmic" evidence="10">
    <location>
        <begin position="532"/>
        <end position="554"/>
    </location>
</feature>
<feature type="transmembrane region" description="Helical; Name=9" evidence="3">
    <location>
        <begin position="555"/>
        <end position="575"/>
    </location>
</feature>
<feature type="transmembrane region" description="Helical; Name=10" evidence="3">
    <location>
        <begin position="576"/>
        <end position="598"/>
    </location>
</feature>
<feature type="topological domain" description="Cytoplasmic" evidence="10">
    <location>
        <begin position="599"/>
        <end position="612"/>
    </location>
</feature>
<feature type="transmembrane region" description="Helical; Name=11" evidence="3">
    <location>
        <begin position="613"/>
        <end position="635"/>
    </location>
</feature>
<feature type="transmembrane region" description="Helical; Name=12" evidence="3">
    <location>
        <begin position="636"/>
        <end position="651"/>
    </location>
</feature>
<feature type="topological domain" description="Cytoplasmic" evidence="10">
    <location>
        <begin position="652"/>
        <end position="1085"/>
    </location>
</feature>
<feature type="region of interest" description="Disordered" evidence="6">
    <location>
        <begin position="28"/>
        <end position="47"/>
    </location>
</feature>
<feature type="region of interest" description="Scissor helix" evidence="3">
    <location>
        <begin position="665"/>
        <end position="681"/>
    </location>
</feature>
<feature type="compositionally biased region" description="Basic and acidic residues" evidence="6">
    <location>
        <begin position="28"/>
        <end position="46"/>
    </location>
</feature>
<feature type="binding site" evidence="3">
    <location>
        <position position="131"/>
    </location>
    <ligand>
        <name>K(+)</name>
        <dbReference type="ChEBI" id="CHEBI:29103"/>
    </ligand>
</feature>
<feature type="binding site" evidence="3">
    <location>
        <position position="132"/>
    </location>
    <ligand>
        <name>K(+)</name>
        <dbReference type="ChEBI" id="CHEBI:29103"/>
    </ligand>
</feature>
<feature type="binding site" evidence="3">
    <location>
        <position position="216"/>
    </location>
    <ligand>
        <name>K(+)</name>
        <dbReference type="ChEBI" id="CHEBI:29103"/>
    </ligand>
</feature>
<feature type="binding site" evidence="3">
    <location>
        <position position="429"/>
    </location>
    <ligand>
        <name>K(+)</name>
        <dbReference type="ChEBI" id="CHEBI:29103"/>
    </ligand>
</feature>
<feature type="binding site" evidence="3">
    <location>
        <position position="432"/>
    </location>
    <ligand>
        <name>K(+)</name>
        <dbReference type="ChEBI" id="CHEBI:29103"/>
    </ligand>
</feature>
<feature type="binding site" evidence="3">
    <location>
        <position position="433"/>
    </location>
    <ligand>
        <name>chloride</name>
        <dbReference type="ChEBI" id="CHEBI:17996"/>
        <label>1</label>
    </ligand>
</feature>
<feature type="binding site" evidence="3">
    <location>
        <position position="434"/>
    </location>
    <ligand>
        <name>chloride</name>
        <dbReference type="ChEBI" id="CHEBI:17996"/>
        <label>1</label>
    </ligand>
</feature>
<feature type="binding site" evidence="3">
    <location>
        <position position="435"/>
    </location>
    <ligand>
        <name>chloride</name>
        <dbReference type="ChEBI" id="CHEBI:17996"/>
        <label>1</label>
    </ligand>
</feature>
<feature type="binding site" evidence="3">
    <location>
        <position position="589"/>
    </location>
    <ligand>
        <name>chloride</name>
        <dbReference type="ChEBI" id="CHEBI:17996"/>
        <label>1</label>
    </ligand>
</feature>
<feature type="binding site" evidence="3">
    <location>
        <position position="589"/>
    </location>
    <ligand>
        <name>chloride</name>
        <dbReference type="ChEBI" id="CHEBI:17996"/>
        <label>2</label>
    </ligand>
</feature>
<feature type="binding site" evidence="3">
    <location>
        <position position="697"/>
    </location>
    <ligand>
        <name>ATP</name>
        <dbReference type="ChEBI" id="CHEBI:30616"/>
    </ligand>
</feature>
<feature type="binding site" evidence="3">
    <location>
        <position position="699"/>
    </location>
    <ligand>
        <name>ATP</name>
        <dbReference type="ChEBI" id="CHEBI:30616"/>
    </ligand>
</feature>
<feature type="binding site" evidence="3">
    <location>
        <position position="707"/>
    </location>
    <ligand>
        <name>ATP</name>
        <dbReference type="ChEBI" id="CHEBI:30616"/>
    </ligand>
</feature>
<feature type="binding site" evidence="3">
    <location>
        <position position="708"/>
    </location>
    <ligand>
        <name>ATP</name>
        <dbReference type="ChEBI" id="CHEBI:30616"/>
    </ligand>
</feature>
<feature type="binding site" evidence="3">
    <location>
        <position position="730"/>
    </location>
    <ligand>
        <name>ATP</name>
        <dbReference type="ChEBI" id="CHEBI:30616"/>
    </ligand>
</feature>
<feature type="binding site" evidence="3">
    <location>
        <position position="794"/>
    </location>
    <ligand>
        <name>ATP</name>
        <dbReference type="ChEBI" id="CHEBI:30616"/>
    </ligand>
</feature>
<feature type="binding site" evidence="3">
    <location>
        <position position="795"/>
    </location>
    <ligand>
        <name>ATP</name>
        <dbReference type="ChEBI" id="CHEBI:30616"/>
    </ligand>
</feature>
<feature type="binding site" evidence="3">
    <location>
        <position position="797"/>
    </location>
    <ligand>
        <name>ATP</name>
        <dbReference type="ChEBI" id="CHEBI:30616"/>
    </ligand>
</feature>
<feature type="modified residue" description="Phosphoserine" evidence="3">
    <location>
        <position position="24"/>
    </location>
</feature>
<feature type="modified residue" description="Phosphoserine" evidence="1">
    <location>
        <position position="47"/>
    </location>
</feature>
<feature type="modified residue" description="Phosphoserine" evidence="4">
    <location>
        <position position="59"/>
    </location>
</feature>
<feature type="modified residue" description="Phosphoserine" evidence="2">
    <location>
        <position position="81"/>
    </location>
</feature>
<feature type="modified residue" description="Phosphoserine" evidence="3">
    <location>
        <position position="88"/>
    </location>
</feature>
<feature type="modified residue" description="Phosphoserine" evidence="3">
    <location>
        <position position="734"/>
    </location>
</feature>
<feature type="modified residue" description="Phosphoserine" evidence="3">
    <location>
        <position position="916"/>
    </location>
</feature>
<feature type="modified residue" description="Phosphoserine" evidence="3">
    <location>
        <position position="967"/>
    </location>
</feature>
<feature type="modified residue" description="Phosphothreonine" evidence="3">
    <location>
        <position position="983"/>
    </location>
</feature>
<feature type="modified residue" description="Phosphoserine" evidence="3">
    <location>
        <position position="1050"/>
    </location>
</feature>
<feature type="glycosylation site" description="N-linked (GlcNAc...) asparagine" evidence="5">
    <location>
        <position position="245"/>
    </location>
</feature>
<feature type="glycosylation site" description="N-linked (GlcNAc...) asparagine" evidence="5">
    <location>
        <position position="312"/>
    </location>
</feature>
<feature type="glycosylation site" description="N-linked (GlcNAc...) asparagine" evidence="5">
    <location>
        <position position="331"/>
    </location>
</feature>
<feature type="glycosylation site" description="N-linked (GlcNAc...) asparagine" evidence="5">
    <location>
        <position position="347"/>
    </location>
</feature>
<feature type="disulfide bond" evidence="3">
    <location>
        <begin position="308"/>
        <end position="323"/>
    </location>
</feature>
<feature type="disulfide bond" evidence="3">
    <location>
        <begin position="343"/>
        <end position="353"/>
    </location>
</feature>
<name>S12A4_RABIT</name>
<dbReference type="EMBL" id="U55053">
    <property type="protein sequence ID" value="AAC48593.1"/>
    <property type="molecule type" value="mRNA"/>
</dbReference>
<dbReference type="PIR" id="T18369">
    <property type="entry name" value="T18369"/>
</dbReference>
<dbReference type="RefSeq" id="NP_001076172.1">
    <property type="nucleotide sequence ID" value="NM_001082703.2"/>
</dbReference>
<dbReference type="SMR" id="Q28677"/>
<dbReference type="FunCoup" id="Q28677">
    <property type="interactions" value="417"/>
</dbReference>
<dbReference type="STRING" id="9986.ENSOCUP00000005495"/>
<dbReference type="GlyCosmos" id="Q28677">
    <property type="glycosylation" value="5 sites, No reported glycans"/>
</dbReference>
<dbReference type="PaxDb" id="9986-ENSOCUP00000005495"/>
<dbReference type="GeneID" id="100009441"/>
<dbReference type="KEGG" id="ocu:100009441"/>
<dbReference type="CTD" id="6560"/>
<dbReference type="eggNOG" id="KOG2082">
    <property type="taxonomic scope" value="Eukaryota"/>
</dbReference>
<dbReference type="InParanoid" id="Q28677"/>
<dbReference type="OrthoDB" id="2020542at2759"/>
<dbReference type="Proteomes" id="UP000001811">
    <property type="component" value="Unplaced"/>
</dbReference>
<dbReference type="GO" id="GO:0016020">
    <property type="term" value="C:membrane"/>
    <property type="evidence" value="ECO:0000314"/>
    <property type="project" value="UniProtKB"/>
</dbReference>
<dbReference type="GO" id="GO:0005886">
    <property type="term" value="C:plasma membrane"/>
    <property type="evidence" value="ECO:0000314"/>
    <property type="project" value="UniProtKB"/>
</dbReference>
<dbReference type="GO" id="GO:0045202">
    <property type="term" value="C:synapse"/>
    <property type="evidence" value="ECO:0007669"/>
    <property type="project" value="GOC"/>
</dbReference>
<dbReference type="GO" id="GO:0005524">
    <property type="term" value="F:ATP binding"/>
    <property type="evidence" value="ECO:0000250"/>
    <property type="project" value="UniProtKB"/>
</dbReference>
<dbReference type="GO" id="GO:0046872">
    <property type="term" value="F:metal ion binding"/>
    <property type="evidence" value="ECO:0007669"/>
    <property type="project" value="UniProtKB-KW"/>
</dbReference>
<dbReference type="GO" id="GO:0015379">
    <property type="term" value="F:potassium:chloride symporter activity"/>
    <property type="evidence" value="ECO:0000314"/>
    <property type="project" value="UniProtKB"/>
</dbReference>
<dbReference type="GO" id="GO:0006884">
    <property type="term" value="P:cell volume homeostasis"/>
    <property type="evidence" value="ECO:0007669"/>
    <property type="project" value="TreeGrafter"/>
</dbReference>
<dbReference type="GO" id="GO:0007268">
    <property type="term" value="P:chemical synaptic transmission"/>
    <property type="evidence" value="ECO:0007669"/>
    <property type="project" value="TreeGrafter"/>
</dbReference>
<dbReference type="GO" id="GO:0055064">
    <property type="term" value="P:chloride ion homeostasis"/>
    <property type="evidence" value="ECO:0000314"/>
    <property type="project" value="UniProtKB"/>
</dbReference>
<dbReference type="GO" id="GO:0055075">
    <property type="term" value="P:potassium ion homeostasis"/>
    <property type="evidence" value="ECO:0000314"/>
    <property type="project" value="UniProtKB"/>
</dbReference>
<dbReference type="GO" id="GO:1990573">
    <property type="term" value="P:potassium ion import across plasma membrane"/>
    <property type="evidence" value="ECO:0000314"/>
    <property type="project" value="ARUK-UCL"/>
</dbReference>
<dbReference type="GO" id="GO:0071805">
    <property type="term" value="P:potassium ion transmembrane transport"/>
    <property type="evidence" value="ECO:0000314"/>
    <property type="project" value="UniProtKB"/>
</dbReference>
<dbReference type="FunFam" id="1.20.1740.10:FF:000049">
    <property type="entry name" value="Solute carrier family 12 (potassium/chloride transporter), member 4"/>
    <property type="match status" value="1"/>
</dbReference>
<dbReference type="FunFam" id="1.20.1740.10:FF:000040">
    <property type="entry name" value="Solute carrier family 12 member 6"/>
    <property type="match status" value="1"/>
</dbReference>
<dbReference type="Gene3D" id="1.20.1740.10">
    <property type="entry name" value="Amino acid/polyamine transporter I"/>
    <property type="match status" value="1"/>
</dbReference>
<dbReference type="InterPro" id="IPR004841">
    <property type="entry name" value="AA-permease/SLC12A_dom"/>
</dbReference>
<dbReference type="InterPro" id="IPR000622">
    <property type="entry name" value="KCC1"/>
</dbReference>
<dbReference type="InterPro" id="IPR000076">
    <property type="entry name" value="KCL_cotranspt"/>
</dbReference>
<dbReference type="InterPro" id="IPR018491">
    <property type="entry name" value="SLC12_C"/>
</dbReference>
<dbReference type="InterPro" id="IPR004842">
    <property type="entry name" value="SLC12A_fam"/>
</dbReference>
<dbReference type="NCBIfam" id="TIGR00930">
    <property type="entry name" value="2a30"/>
    <property type="match status" value="1"/>
</dbReference>
<dbReference type="PANTHER" id="PTHR11827:SF46">
    <property type="entry name" value="SOLUTE CARRIER FAMILY 12 MEMBER 4"/>
    <property type="match status" value="1"/>
</dbReference>
<dbReference type="PANTHER" id="PTHR11827">
    <property type="entry name" value="SOLUTE CARRIER FAMILY 12, CATION COTRANSPORTERS"/>
    <property type="match status" value="1"/>
</dbReference>
<dbReference type="Pfam" id="PF00324">
    <property type="entry name" value="AA_permease"/>
    <property type="match status" value="2"/>
</dbReference>
<dbReference type="Pfam" id="PF03522">
    <property type="entry name" value="SLC12"/>
    <property type="match status" value="2"/>
</dbReference>
<dbReference type="PRINTS" id="PR01081">
    <property type="entry name" value="KCLTRNSPORT"/>
</dbReference>
<dbReference type="PRINTS" id="PR01082">
    <property type="entry name" value="KCLTRNSPORT1"/>
</dbReference>
<sequence>MPHFTVVPVDGPRRGDYDNLEGLSWVDYGERAEREDPDGHGNHRESSPFLCPLEASRGSDYYDRNLALFEEELDIRPKVSSLLGKLVSYTNLTQGAKEHEEAESGEGTRRRAAKAPSMGTLMGVYLPCLQNIFGVILFLRLTWMVGTAGVLQALLIVLICCCCTLLTAISMSAIATNGVVPAGGSYFMISRSLGPEFGGAVGLCFYLGTTFAAAMYILGAIEILLTYIAPPAAIFYPSGTHDTSNATLNNMRVYGTVFLSFMTLVVFVGVKYVNKFASLFLACVIISILSIYAGGIKSMFDPPVFPVCMLGNRTLSRDQFDICAKTTMVDNETVATRLWSFFCHSPNLTTDSCDPYFLLNNVTEIPGIPGAAAGVLQENLWSAYLEKGEVVEKRGLPSTDAVGLKENLPLYVVADIATSFTVLVGIFFPSVTGIMAGSNRSGDLRDAQKSIPVGTILAIVTTSLVYFSSVVLFGACIEGVVLRDKYGDGVSRNLVVGTLAWPSPWVIVVGSFFSTCGAGLQSLTGAPRLLQAIAKDNIIPFLRVFGHGKANGEPTWALLLTALIAELGILIASLDMVAPILSMFFLMCYLFVNLACAVQTLLRTPNWRPRFKYYHWALSFLGMSLCLALMFVSSWYYALVAMLIAGMIYKYIEYQGAEKEWGDGIRGLSLSAARYALLRLEEGPPHTKNWRPQLLVLLKLDEDLHVKYPRLLTFASQLKAGKGLTIVGSVIQGSFLESYGEAQAAEQTIKNMMKIEKVKGFCQVVVASKVREGLAHLIQSCGLGGMRHNSVVLGWPYGWRQSEDPRAWKTFIDTVRCTTAAHLALLVPKNIAFYPSNHERYLEGHIDVWWIVHDGGMLMLLPFLLRQHKVWRKCRMRIFTVAQMDDNSIQMKKDLAVFLYHLRLEAEVEVVEMHNSDISAYTYERTLMMEQRSQMLRQMRLTKTEREREAQLVKDRHSALRLESLYSDEEDEAAAGADKIQMTWTRDKYMTEPWDPSHTPDNFRELVHIKPDQSNVRRMHTAVKLNEVIVTRSHDARLVLLNMPGPPKNSEGDENYMEFLEVLTEGLERVLLVRGGGREVITIYS</sequence>
<protein>
    <recommendedName>
        <fullName>Solute carrier family 12 member 4</fullName>
    </recommendedName>
    <alternativeName>
        <fullName>Electroneutral potassium-chloride cotransporter 1</fullName>
    </alternativeName>
    <alternativeName>
        <fullName>Erythroid K-Cl cotransporter 1</fullName>
    </alternativeName>
    <alternativeName>
        <fullName>rbKCC1</fullName>
    </alternativeName>
</protein>
<proteinExistence type="evidence at protein level"/>
<comment type="function">
    <text evidence="9 10">Mediates electroneutral potassium-chloride cotransport when activated by cell swelling (PubMed:8663127). May contribute to cell volume homeostasis in single cells. May be involved in the regulation of basolateral Cl(-) exit in NaCl absorbing epithelia (Probable).</text>
</comment>
<comment type="catalytic activity">
    <reaction evidence="9">
        <text>K(+)(in) + chloride(in) = K(+)(out) + chloride(out)</text>
        <dbReference type="Rhea" id="RHEA:72427"/>
        <dbReference type="ChEBI" id="CHEBI:17996"/>
        <dbReference type="ChEBI" id="CHEBI:29103"/>
    </reaction>
</comment>
<comment type="activity regulation">
    <text evidence="3">Inhibited by WNK3.</text>
</comment>
<comment type="subunit">
    <text evidence="3">Homodimer; adopts a domain-swap conformation at the scissor helices connecting the transmembrane domain and C-terminal domain. Heterodimer with other K-Cl cotransporters.</text>
</comment>
<comment type="subcellular location">
    <subcellularLocation>
        <location evidence="7 9">Cell membrane</location>
        <topology evidence="5">Multi-pass membrane protein</topology>
    </subcellularLocation>
</comment>
<comment type="PTM">
    <text evidence="8">N-glycosylated.</text>
</comment>
<comment type="PTM">
    <text evidence="3">Phosphorylated, phosphorylation may regulate transporter activity.</text>
</comment>
<comment type="miscellaneous">
    <text>Activated by N-ethylmaleimide (NEM). Inhibited by furosemide and bumetanide.</text>
</comment>
<comment type="similarity">
    <text evidence="10">Belongs to the SLC12A transporter family. K/Cl co-transporter subfamily.</text>
</comment>
<keyword id="KW-0067">ATP-binding</keyword>
<keyword id="KW-1003">Cell membrane</keyword>
<keyword id="KW-0868">Chloride</keyword>
<keyword id="KW-1015">Disulfide bond</keyword>
<keyword id="KW-0325">Glycoprotein</keyword>
<keyword id="KW-0406">Ion transport</keyword>
<keyword id="KW-0472">Membrane</keyword>
<keyword id="KW-0479">Metal-binding</keyword>
<keyword id="KW-0547">Nucleotide-binding</keyword>
<keyword id="KW-0597">Phosphoprotein</keyword>
<keyword id="KW-0630">Potassium</keyword>
<keyword id="KW-0633">Potassium transport</keyword>
<keyword id="KW-1185">Reference proteome</keyword>
<keyword id="KW-0769">Symport</keyword>
<keyword id="KW-0812">Transmembrane</keyword>
<keyword id="KW-1133">Transmembrane helix</keyword>
<keyword id="KW-0813">Transport</keyword>
<reference key="1">
    <citation type="journal article" date="1996" name="J. Biol. Chem.">
        <title>Molecular cloning and functional expression of the K-Cl cotransporter from rabbit, rat, and human. A new member of the cation-chloride cotransporter family.</title>
        <authorList>
            <person name="Gillen C.M."/>
            <person name="Brill S."/>
            <person name="Payne J.A."/>
            <person name="Forbush B. III"/>
        </authorList>
    </citation>
    <scope>NUCLEOTIDE SEQUENCE [MRNA]</scope>
    <scope>SUBCELLULAR LOCATION</scope>
    <scope>FUNCTION</scope>
    <scope>TRANSPORTER ACTIVITY</scope>
    <source>
        <strain>New Zealand white</strain>
        <tissue>Kidney</tissue>
    </source>
</reference>
<reference key="2">
    <citation type="journal article" date="1999" name="J. Biol. Chem.">
        <title>Cloning and characterization of KCC3 and KCC4, new members of the cation-chloride cotransporter gene family.</title>
        <authorList>
            <person name="Mount D.B."/>
            <person name="Mercado A."/>
            <person name="Song L."/>
            <person name="Xu J."/>
            <person name="George A.L. Jr."/>
            <person name="Delpire E."/>
            <person name="Gamba G."/>
        </authorList>
    </citation>
    <scope>SUBCELLULAR LOCATION</scope>
</reference>
<reference key="3">
    <citation type="journal article" date="1999" name="Am. J. Physiol.">
        <title>Mouse K-Cl cotransporter KCC1: cloning, mapping, pathological expression, and functional regulation.</title>
        <authorList>
            <person name="Su W."/>
            <person name="Shmukler B.E."/>
            <person name="Chernova M.N."/>
            <person name="Stuart-Tilley A.K."/>
            <person name="de Franceschi L."/>
            <person name="Brugnara C."/>
            <person name="Alper S.L."/>
        </authorList>
    </citation>
    <scope>GLYCOSYLATION</scope>
</reference>
<organism>
    <name type="scientific">Oryctolagus cuniculus</name>
    <name type="common">Rabbit</name>
    <dbReference type="NCBI Taxonomy" id="9986"/>
    <lineage>
        <taxon>Eukaryota</taxon>
        <taxon>Metazoa</taxon>
        <taxon>Chordata</taxon>
        <taxon>Craniata</taxon>
        <taxon>Vertebrata</taxon>
        <taxon>Euteleostomi</taxon>
        <taxon>Mammalia</taxon>
        <taxon>Eutheria</taxon>
        <taxon>Euarchontoglires</taxon>
        <taxon>Glires</taxon>
        <taxon>Lagomorpha</taxon>
        <taxon>Leporidae</taxon>
        <taxon>Oryctolagus</taxon>
    </lineage>
</organism>
<gene>
    <name type="primary">SLC12A4</name>
    <name type="synonym">KCC1</name>
</gene>
<evidence type="ECO:0000250" key="1">
    <source>
        <dbReference type="UniProtKB" id="Q9JIS8"/>
    </source>
</evidence>
<evidence type="ECO:0000250" key="2">
    <source>
        <dbReference type="UniProtKB" id="Q9UHW9"/>
    </source>
</evidence>
<evidence type="ECO:0000250" key="3">
    <source>
        <dbReference type="UniProtKB" id="Q9UP95"/>
    </source>
</evidence>
<evidence type="ECO:0000250" key="4">
    <source>
        <dbReference type="UniProtKB" id="Q9Y666"/>
    </source>
</evidence>
<evidence type="ECO:0000255" key="5"/>
<evidence type="ECO:0000256" key="6">
    <source>
        <dbReference type="SAM" id="MobiDB-lite"/>
    </source>
</evidence>
<evidence type="ECO:0000269" key="7">
    <source>
    </source>
</evidence>
<evidence type="ECO:0000269" key="8">
    <source>
    </source>
</evidence>
<evidence type="ECO:0000269" key="9">
    <source>
    </source>
</evidence>
<evidence type="ECO:0000305" key="10"/>
<accession>Q28677</accession>